<organism>
    <name type="scientific">Bacillus licheniformis (strain ATCC 14580 / DSM 13 / JCM 2505 / CCUG 7422 / NBRC 12200 / NCIMB 9375 / NCTC 10341 / NRRL NRS-1264 / Gibson 46)</name>
    <dbReference type="NCBI Taxonomy" id="279010"/>
    <lineage>
        <taxon>Bacteria</taxon>
        <taxon>Bacillati</taxon>
        <taxon>Bacillota</taxon>
        <taxon>Bacilli</taxon>
        <taxon>Bacillales</taxon>
        <taxon>Bacillaceae</taxon>
        <taxon>Bacillus</taxon>
    </lineage>
</organism>
<keyword id="KW-0067">ATP-binding</keyword>
<keyword id="KW-0963">Cytoplasm</keyword>
<keyword id="KW-0436">Ligase</keyword>
<keyword id="KW-0547">Nucleotide-binding</keyword>
<keyword id="KW-1185">Reference proteome</keyword>
<sequence length="502" mass="56010">MKLIETIKKYAQTQPDTLAFVNEEEKLTYGELWSQSERLAARIQSEALTDASPIIVYGHMKPVMAVSFLACVKAGHPYIPVDVSIPADRILKIINSSKAELLLNNSGTSVDTGDALISVVEPGVLEGDGVPETDPGRWVHGEDTFYIIYTSGSTGNPKGVQISADNLQSFTDWITNDFPVESGQVFLNQAPFSFDLSVMDLYPCLQSGGTLWTVTKDMINRPKLLFEALKQSNVNVWTSTPSFAQMCLMDPSYSEELLPELSLFMFCGETLPASVARQLKERFPKARVFNTYGPTEATVAVTSIEVTDDVLNKYSSLPVGSEKPETEIVIINEDGKAVQDGEKGEIIITGASVSKGYLGEKALTEKAFFSYNGSPAYRTGDAGYKENGQLFFLGRLDFQIKLHGYRIELEEIEYQINQSRYVQSAVVIPFYREEKIEYLIAMIVPAEHDFEKEYQLTSAIKKDLGSKLPAYMIPRKFMYQKEIPMTANGKIDRKRLKEEVTV</sequence>
<name>DLTA_BACLD</name>
<evidence type="ECO:0000255" key="1">
    <source>
        <dbReference type="HAMAP-Rule" id="MF_00593"/>
    </source>
</evidence>
<comment type="function">
    <text evidence="1">Catalyzes the first step in the D-alanylation of lipoteichoic acid (LTA), the activation of D-alanine and its transfer onto the D-alanyl carrier protein (Dcp) DltC. In an ATP-dependent two-step reaction, forms a high energy D-alanyl-AMP intermediate, followed by transfer of the D-alanyl residue as a thiol ester to the phosphopantheinyl prosthetic group of the Dcp. D-alanylation of LTA plays an important role in modulating the properties of the cell wall in Gram-positive bacteria, influencing the net charge of the cell wall.</text>
</comment>
<comment type="catalytic activity">
    <reaction evidence="1">
        <text>holo-[D-alanyl-carrier protein] + D-alanine + ATP = D-alanyl-[D-alanyl-carrier protein] + AMP + diphosphate</text>
        <dbReference type="Rhea" id="RHEA:55132"/>
        <dbReference type="Rhea" id="RHEA-COMP:14102"/>
        <dbReference type="Rhea" id="RHEA-COMP:14103"/>
        <dbReference type="ChEBI" id="CHEBI:30616"/>
        <dbReference type="ChEBI" id="CHEBI:33019"/>
        <dbReference type="ChEBI" id="CHEBI:57416"/>
        <dbReference type="ChEBI" id="CHEBI:64479"/>
        <dbReference type="ChEBI" id="CHEBI:138620"/>
        <dbReference type="ChEBI" id="CHEBI:456215"/>
        <dbReference type="EC" id="6.2.1.54"/>
    </reaction>
</comment>
<comment type="pathway">
    <text evidence="1">Cell wall biogenesis; lipoteichoic acid biosynthesis.</text>
</comment>
<comment type="subcellular location">
    <subcellularLocation>
        <location evidence="1">Cytoplasm</location>
    </subcellularLocation>
</comment>
<comment type="similarity">
    <text evidence="1">Belongs to the ATP-dependent AMP-binding enzyme family. DltA subfamily.</text>
</comment>
<accession>Q65DH1</accession>
<accession>Q62NZ1</accession>
<protein>
    <recommendedName>
        <fullName evidence="1">D-alanine--D-alanyl carrier protein ligase</fullName>
        <shortName evidence="1">DCL</shortName>
        <ecNumber evidence="1">6.2.1.54</ecNumber>
    </recommendedName>
    <alternativeName>
        <fullName evidence="1">D-alanine--poly(phosphoribitol) ligase subunit 1</fullName>
    </alternativeName>
    <alternativeName>
        <fullName evidence="1">D-alanine-activating enzyme</fullName>
        <shortName evidence="1">DAE</shortName>
    </alternativeName>
</protein>
<reference key="1">
    <citation type="journal article" date="2004" name="J. Mol. Microbiol. Biotechnol.">
        <title>The complete genome sequence of Bacillus licheniformis DSM13, an organism with great industrial potential.</title>
        <authorList>
            <person name="Veith B."/>
            <person name="Herzberg C."/>
            <person name="Steckel S."/>
            <person name="Feesche J."/>
            <person name="Maurer K.H."/>
            <person name="Ehrenreich P."/>
            <person name="Baeumer S."/>
            <person name="Henne A."/>
            <person name="Liesegang H."/>
            <person name="Merkl R."/>
            <person name="Ehrenreich A."/>
            <person name="Gottschalk G."/>
        </authorList>
    </citation>
    <scope>NUCLEOTIDE SEQUENCE [LARGE SCALE GENOMIC DNA]</scope>
    <source>
        <strain>ATCC 14580 / DSM 13 / JCM 2505 / CCUG 7422 / NBRC 12200 / NCIMB 9375 / NCTC 10341 / NRRL NRS-1264 / Gibson 46</strain>
    </source>
</reference>
<reference key="2">
    <citation type="journal article" date="2004" name="Genome Biol.">
        <title>Complete genome sequence of the industrial bacterium Bacillus licheniformis and comparisons with closely related Bacillus species.</title>
        <authorList>
            <person name="Rey M.W."/>
            <person name="Ramaiya P."/>
            <person name="Nelson B.A."/>
            <person name="Brody-Karpin S.D."/>
            <person name="Zaretsky E.J."/>
            <person name="Tang M."/>
            <person name="Lopez de Leon A."/>
            <person name="Xiang H."/>
            <person name="Gusti V."/>
            <person name="Clausen I.G."/>
            <person name="Olsen P.B."/>
            <person name="Rasmussen M.D."/>
            <person name="Andersen J.T."/>
            <person name="Joergensen P.L."/>
            <person name="Larsen T.S."/>
            <person name="Sorokin A."/>
            <person name="Bolotin A."/>
            <person name="Lapidus A."/>
            <person name="Galleron N."/>
            <person name="Ehrlich S.D."/>
            <person name="Berka R.M."/>
        </authorList>
    </citation>
    <scope>NUCLEOTIDE SEQUENCE [LARGE SCALE GENOMIC DNA]</scope>
    <source>
        <strain>ATCC 14580 / DSM 13 / JCM 2505 / CCUG 7422 / NBRC 12200 / NCIMB 9375 / NCTC 10341 / NRRL NRS-1264 / Gibson 46</strain>
    </source>
</reference>
<dbReference type="EC" id="6.2.1.54" evidence="1"/>
<dbReference type="EMBL" id="CP000002">
    <property type="protein sequence ID" value="AAU25520.1"/>
    <property type="molecule type" value="Genomic_DNA"/>
</dbReference>
<dbReference type="EMBL" id="AE017333">
    <property type="protein sequence ID" value="AAU42893.1"/>
    <property type="molecule type" value="Genomic_DNA"/>
</dbReference>
<dbReference type="RefSeq" id="WP_003186280.1">
    <property type="nucleotide sequence ID" value="NC_006322.1"/>
</dbReference>
<dbReference type="SMR" id="Q65DH1"/>
<dbReference type="STRING" id="279010.BL03934"/>
<dbReference type="GeneID" id="92859348"/>
<dbReference type="KEGG" id="bld:BLi04080"/>
<dbReference type="KEGG" id="bli:BL03934"/>
<dbReference type="PATRIC" id="fig|279010.13.peg.4158"/>
<dbReference type="eggNOG" id="COG1020">
    <property type="taxonomic scope" value="Bacteria"/>
</dbReference>
<dbReference type="HOGENOM" id="CLU_000022_2_12_9"/>
<dbReference type="UniPathway" id="UPA00556"/>
<dbReference type="Proteomes" id="UP000000606">
    <property type="component" value="Chromosome"/>
</dbReference>
<dbReference type="GO" id="GO:0005737">
    <property type="term" value="C:cytoplasm"/>
    <property type="evidence" value="ECO:0007669"/>
    <property type="project" value="UniProtKB-SubCell"/>
</dbReference>
<dbReference type="GO" id="GO:0005524">
    <property type="term" value="F:ATP binding"/>
    <property type="evidence" value="ECO:0007669"/>
    <property type="project" value="UniProtKB-KW"/>
</dbReference>
<dbReference type="GO" id="GO:0047473">
    <property type="term" value="F:D-alanine [D-alanyl carrier protein] ligase activity"/>
    <property type="evidence" value="ECO:0007669"/>
    <property type="project" value="UniProtKB-UniRule"/>
</dbReference>
<dbReference type="GO" id="GO:0070395">
    <property type="term" value="P:lipoteichoic acid biosynthetic process"/>
    <property type="evidence" value="ECO:0007669"/>
    <property type="project" value="UniProtKB-UniRule"/>
</dbReference>
<dbReference type="CDD" id="cd05945">
    <property type="entry name" value="DltA"/>
    <property type="match status" value="1"/>
</dbReference>
<dbReference type="FunFam" id="3.30.300.30:FF:000012">
    <property type="entry name" value="D-alanine--D-alanyl carrier protein ligase"/>
    <property type="match status" value="1"/>
</dbReference>
<dbReference type="Gene3D" id="3.30.300.30">
    <property type="match status" value="1"/>
</dbReference>
<dbReference type="Gene3D" id="3.40.50.12780">
    <property type="entry name" value="N-terminal domain of ligase-like"/>
    <property type="match status" value="1"/>
</dbReference>
<dbReference type="HAMAP" id="MF_00593">
    <property type="entry name" value="DltA"/>
    <property type="match status" value="1"/>
</dbReference>
<dbReference type="InterPro" id="IPR010071">
    <property type="entry name" value="AA_adenyl_dom"/>
</dbReference>
<dbReference type="InterPro" id="IPR025110">
    <property type="entry name" value="AMP-bd_C"/>
</dbReference>
<dbReference type="InterPro" id="IPR045851">
    <property type="entry name" value="AMP-bd_C_sf"/>
</dbReference>
<dbReference type="InterPro" id="IPR020845">
    <property type="entry name" value="AMP-binding_CS"/>
</dbReference>
<dbReference type="InterPro" id="IPR000873">
    <property type="entry name" value="AMP-dep_synth/lig_dom"/>
</dbReference>
<dbReference type="InterPro" id="IPR042099">
    <property type="entry name" value="ANL_N_sf"/>
</dbReference>
<dbReference type="InterPro" id="IPR010072">
    <property type="entry name" value="DltA"/>
</dbReference>
<dbReference type="InterPro" id="IPR044507">
    <property type="entry name" value="DltA-like"/>
</dbReference>
<dbReference type="NCBIfam" id="TIGR01733">
    <property type="entry name" value="AA-adenyl-dom"/>
    <property type="match status" value="1"/>
</dbReference>
<dbReference type="NCBIfam" id="TIGR01734">
    <property type="entry name" value="D-ala-DACP-lig"/>
    <property type="match status" value="1"/>
</dbReference>
<dbReference type="NCBIfam" id="NF003417">
    <property type="entry name" value="PRK04813.1"/>
    <property type="match status" value="1"/>
</dbReference>
<dbReference type="PANTHER" id="PTHR45398">
    <property type="match status" value="1"/>
</dbReference>
<dbReference type="PANTHER" id="PTHR45398:SF1">
    <property type="entry name" value="ENZYME, PUTATIVE (JCVI)-RELATED"/>
    <property type="match status" value="1"/>
</dbReference>
<dbReference type="Pfam" id="PF00501">
    <property type="entry name" value="AMP-binding"/>
    <property type="match status" value="1"/>
</dbReference>
<dbReference type="Pfam" id="PF13193">
    <property type="entry name" value="AMP-binding_C"/>
    <property type="match status" value="1"/>
</dbReference>
<dbReference type="SUPFAM" id="SSF56801">
    <property type="entry name" value="Acetyl-CoA synthetase-like"/>
    <property type="match status" value="1"/>
</dbReference>
<dbReference type="PROSITE" id="PS00455">
    <property type="entry name" value="AMP_BINDING"/>
    <property type="match status" value="1"/>
</dbReference>
<gene>
    <name evidence="1" type="primary">dltA</name>
    <name type="ordered locus">BLi04080</name>
    <name type="ordered locus">BL03934</name>
</gene>
<feature type="chain" id="PRO_1000025529" description="D-alanine--D-alanyl carrier protein ligase">
    <location>
        <begin position="1"/>
        <end position="502"/>
    </location>
</feature>
<feature type="binding site" evidence="1">
    <location>
        <begin position="150"/>
        <end position="151"/>
    </location>
    <ligand>
        <name>ATP</name>
        <dbReference type="ChEBI" id="CHEBI:30616"/>
    </ligand>
</feature>
<feature type="binding site" evidence="1">
    <location>
        <position position="195"/>
    </location>
    <ligand>
        <name>D-alanine</name>
        <dbReference type="ChEBI" id="CHEBI:57416"/>
    </ligand>
</feature>
<feature type="binding site" evidence="1">
    <location>
        <begin position="290"/>
        <end position="295"/>
    </location>
    <ligand>
        <name>ATP</name>
        <dbReference type="ChEBI" id="CHEBI:30616"/>
    </ligand>
</feature>
<feature type="binding site" evidence="1">
    <location>
        <position position="299"/>
    </location>
    <ligand>
        <name>D-alanine</name>
        <dbReference type="ChEBI" id="CHEBI:57416"/>
    </ligand>
</feature>
<feature type="binding site" evidence="1">
    <location>
        <position position="381"/>
    </location>
    <ligand>
        <name>ATP</name>
        <dbReference type="ChEBI" id="CHEBI:30616"/>
    </ligand>
</feature>
<feature type="binding site" evidence="1">
    <location>
        <position position="490"/>
    </location>
    <ligand>
        <name>ATP</name>
        <dbReference type="ChEBI" id="CHEBI:30616"/>
    </ligand>
</feature>
<feature type="binding site" evidence="1">
    <location>
        <position position="490"/>
    </location>
    <ligand>
        <name>D-alanine</name>
        <dbReference type="ChEBI" id="CHEBI:57416"/>
    </ligand>
</feature>
<proteinExistence type="inferred from homology"/>